<name>LEU3_SYNE7</name>
<sequence length="365" mass="39194">MTRSYRITLLPGDGIGPEIMAVTVDILRAIGRQFDLNFEFEEALIGGSAIDATGEPLPEATLATCRNSDAVLLAAIGGYKWDSLPRSQRPETGLLGLRAGLGLFANLRPAAILPQLVDASSLKREVIEGVDLMVVRELTGGIYFGEPKGCFADEQGRQRAFNTMVYREDEIDRIGRVAFDIARKRGKRLCSVDKANVLEVSQLWRDRMTLLGSDYADVELSHLYVDNAAMQLVRWPKQFDTIVTGNLFGDILSDIAAMLTGSIGMLPSASLGAEGPGVFEPVHGSAPDIAGQDKANPLAQVLSAAMMLRYGLDEPEAAARIEAAVNQVLDQGYRTGDLYSEGMTLVGCKGMGDALLAALESPVSA</sequence>
<evidence type="ECO:0000255" key="1">
    <source>
        <dbReference type="HAMAP-Rule" id="MF_01033"/>
    </source>
</evidence>
<organism>
    <name type="scientific">Synechococcus elongatus (strain ATCC 33912 / PCC 7942 / FACHB-805)</name>
    <name type="common">Anacystis nidulans R2</name>
    <dbReference type="NCBI Taxonomy" id="1140"/>
    <lineage>
        <taxon>Bacteria</taxon>
        <taxon>Bacillati</taxon>
        <taxon>Cyanobacteriota</taxon>
        <taxon>Cyanophyceae</taxon>
        <taxon>Synechococcales</taxon>
        <taxon>Synechococcaceae</taxon>
        <taxon>Synechococcus</taxon>
    </lineage>
</organism>
<dbReference type="EC" id="1.1.1.85" evidence="1"/>
<dbReference type="EMBL" id="CP000100">
    <property type="protein sequence ID" value="ABB57535.1"/>
    <property type="molecule type" value="Genomic_DNA"/>
</dbReference>
<dbReference type="RefSeq" id="WP_011378058.1">
    <property type="nucleotide sequence ID" value="NZ_JACJTX010000004.1"/>
</dbReference>
<dbReference type="SMR" id="Q31N34"/>
<dbReference type="STRING" id="1140.Synpcc7942_1505"/>
<dbReference type="PaxDb" id="1140-Synpcc7942_1505"/>
<dbReference type="GeneID" id="72430461"/>
<dbReference type="KEGG" id="syf:Synpcc7942_1505"/>
<dbReference type="eggNOG" id="COG0473">
    <property type="taxonomic scope" value="Bacteria"/>
</dbReference>
<dbReference type="HOGENOM" id="CLU_031953_0_3_3"/>
<dbReference type="OrthoDB" id="9806254at2"/>
<dbReference type="BioCyc" id="SYNEL:SYNPCC7942_1505-MONOMER"/>
<dbReference type="UniPathway" id="UPA00048">
    <property type="reaction ID" value="UER00072"/>
</dbReference>
<dbReference type="Proteomes" id="UP000889800">
    <property type="component" value="Chromosome"/>
</dbReference>
<dbReference type="GO" id="GO:0005829">
    <property type="term" value="C:cytosol"/>
    <property type="evidence" value="ECO:0007669"/>
    <property type="project" value="TreeGrafter"/>
</dbReference>
<dbReference type="GO" id="GO:0003862">
    <property type="term" value="F:3-isopropylmalate dehydrogenase activity"/>
    <property type="evidence" value="ECO:0007669"/>
    <property type="project" value="UniProtKB-UniRule"/>
</dbReference>
<dbReference type="GO" id="GO:0000287">
    <property type="term" value="F:magnesium ion binding"/>
    <property type="evidence" value="ECO:0007669"/>
    <property type="project" value="InterPro"/>
</dbReference>
<dbReference type="GO" id="GO:0051287">
    <property type="term" value="F:NAD binding"/>
    <property type="evidence" value="ECO:0007669"/>
    <property type="project" value="InterPro"/>
</dbReference>
<dbReference type="GO" id="GO:0009098">
    <property type="term" value="P:L-leucine biosynthetic process"/>
    <property type="evidence" value="ECO:0007669"/>
    <property type="project" value="UniProtKB-UniRule"/>
</dbReference>
<dbReference type="FunFam" id="3.40.718.10:FF:000004">
    <property type="entry name" value="3-isopropylmalate dehydrogenase"/>
    <property type="match status" value="1"/>
</dbReference>
<dbReference type="Gene3D" id="3.40.718.10">
    <property type="entry name" value="Isopropylmalate Dehydrogenase"/>
    <property type="match status" value="1"/>
</dbReference>
<dbReference type="HAMAP" id="MF_01033">
    <property type="entry name" value="LeuB_type1"/>
    <property type="match status" value="1"/>
</dbReference>
<dbReference type="InterPro" id="IPR019818">
    <property type="entry name" value="IsoCit/isopropylmalate_DH_CS"/>
</dbReference>
<dbReference type="InterPro" id="IPR024084">
    <property type="entry name" value="IsoPropMal-DH-like_dom"/>
</dbReference>
<dbReference type="InterPro" id="IPR004429">
    <property type="entry name" value="Isopropylmalate_DH"/>
</dbReference>
<dbReference type="NCBIfam" id="TIGR00169">
    <property type="entry name" value="leuB"/>
    <property type="match status" value="1"/>
</dbReference>
<dbReference type="PANTHER" id="PTHR42979">
    <property type="entry name" value="3-ISOPROPYLMALATE DEHYDROGENASE"/>
    <property type="match status" value="1"/>
</dbReference>
<dbReference type="PANTHER" id="PTHR42979:SF1">
    <property type="entry name" value="3-ISOPROPYLMALATE DEHYDROGENASE"/>
    <property type="match status" value="1"/>
</dbReference>
<dbReference type="Pfam" id="PF00180">
    <property type="entry name" value="Iso_dh"/>
    <property type="match status" value="1"/>
</dbReference>
<dbReference type="SMART" id="SM01329">
    <property type="entry name" value="Iso_dh"/>
    <property type="match status" value="1"/>
</dbReference>
<dbReference type="SUPFAM" id="SSF53659">
    <property type="entry name" value="Isocitrate/Isopropylmalate dehydrogenase-like"/>
    <property type="match status" value="1"/>
</dbReference>
<dbReference type="PROSITE" id="PS00470">
    <property type="entry name" value="IDH_IMDH"/>
    <property type="match status" value="1"/>
</dbReference>
<reference key="1">
    <citation type="submission" date="2005-08" db="EMBL/GenBank/DDBJ databases">
        <title>Complete sequence of chromosome 1 of Synechococcus elongatus PCC 7942.</title>
        <authorList>
            <consortium name="US DOE Joint Genome Institute"/>
            <person name="Copeland A."/>
            <person name="Lucas S."/>
            <person name="Lapidus A."/>
            <person name="Barry K."/>
            <person name="Detter J.C."/>
            <person name="Glavina T."/>
            <person name="Hammon N."/>
            <person name="Israni S."/>
            <person name="Pitluck S."/>
            <person name="Schmutz J."/>
            <person name="Larimer F."/>
            <person name="Land M."/>
            <person name="Kyrpides N."/>
            <person name="Lykidis A."/>
            <person name="Golden S."/>
            <person name="Richardson P."/>
        </authorList>
    </citation>
    <scope>NUCLEOTIDE SEQUENCE [LARGE SCALE GENOMIC DNA]</scope>
    <source>
        <strain>ATCC 33912 / PCC 7942 / FACHB-805</strain>
    </source>
</reference>
<feature type="chain" id="PRO_0000250146" description="3-isopropylmalate dehydrogenase">
    <location>
        <begin position="1"/>
        <end position="365"/>
    </location>
</feature>
<feature type="binding site" evidence="1">
    <location>
        <begin position="78"/>
        <end position="91"/>
    </location>
    <ligand>
        <name>NAD(+)</name>
        <dbReference type="ChEBI" id="CHEBI:57540"/>
    </ligand>
</feature>
<feature type="binding site" evidence="1">
    <location>
        <position position="98"/>
    </location>
    <ligand>
        <name>substrate</name>
    </ligand>
</feature>
<feature type="binding site" evidence="1">
    <location>
        <position position="108"/>
    </location>
    <ligand>
        <name>substrate</name>
    </ligand>
</feature>
<feature type="binding site" evidence="1">
    <location>
        <position position="136"/>
    </location>
    <ligand>
        <name>substrate</name>
    </ligand>
</feature>
<feature type="binding site" evidence="1">
    <location>
        <position position="226"/>
    </location>
    <ligand>
        <name>Mg(2+)</name>
        <dbReference type="ChEBI" id="CHEBI:18420"/>
    </ligand>
</feature>
<feature type="binding site" evidence="1">
    <location>
        <position position="226"/>
    </location>
    <ligand>
        <name>substrate</name>
    </ligand>
</feature>
<feature type="binding site" evidence="1">
    <location>
        <position position="250"/>
    </location>
    <ligand>
        <name>Mg(2+)</name>
        <dbReference type="ChEBI" id="CHEBI:18420"/>
    </ligand>
</feature>
<feature type="binding site" evidence="1">
    <location>
        <position position="254"/>
    </location>
    <ligand>
        <name>Mg(2+)</name>
        <dbReference type="ChEBI" id="CHEBI:18420"/>
    </ligand>
</feature>
<feature type="binding site" evidence="1">
    <location>
        <begin position="284"/>
        <end position="296"/>
    </location>
    <ligand>
        <name>NAD(+)</name>
        <dbReference type="ChEBI" id="CHEBI:57540"/>
    </ligand>
</feature>
<feature type="site" description="Important for catalysis" evidence="1">
    <location>
        <position position="143"/>
    </location>
</feature>
<feature type="site" description="Important for catalysis" evidence="1">
    <location>
        <position position="194"/>
    </location>
</feature>
<proteinExistence type="inferred from homology"/>
<comment type="function">
    <text evidence="1">Catalyzes the oxidation of 3-carboxy-2-hydroxy-4-methylpentanoate (3-isopropylmalate) to 3-carboxy-4-methyl-2-oxopentanoate. The product decarboxylates to 4-methyl-2 oxopentanoate.</text>
</comment>
<comment type="catalytic activity">
    <reaction evidence="1">
        <text>(2R,3S)-3-isopropylmalate + NAD(+) = 4-methyl-2-oxopentanoate + CO2 + NADH</text>
        <dbReference type="Rhea" id="RHEA:32271"/>
        <dbReference type="ChEBI" id="CHEBI:16526"/>
        <dbReference type="ChEBI" id="CHEBI:17865"/>
        <dbReference type="ChEBI" id="CHEBI:35121"/>
        <dbReference type="ChEBI" id="CHEBI:57540"/>
        <dbReference type="ChEBI" id="CHEBI:57945"/>
        <dbReference type="EC" id="1.1.1.85"/>
    </reaction>
</comment>
<comment type="cofactor">
    <cofactor evidence="1">
        <name>Mg(2+)</name>
        <dbReference type="ChEBI" id="CHEBI:18420"/>
    </cofactor>
    <cofactor evidence="1">
        <name>Mn(2+)</name>
        <dbReference type="ChEBI" id="CHEBI:29035"/>
    </cofactor>
    <text evidence="1">Binds 1 Mg(2+) or Mn(2+) ion per subunit.</text>
</comment>
<comment type="pathway">
    <text evidence="1">Amino-acid biosynthesis; L-leucine biosynthesis; L-leucine from 3-methyl-2-oxobutanoate: step 3/4.</text>
</comment>
<comment type="subunit">
    <text evidence="1">Homodimer.</text>
</comment>
<comment type="subcellular location">
    <subcellularLocation>
        <location evidence="1">Cytoplasm</location>
    </subcellularLocation>
</comment>
<comment type="similarity">
    <text evidence="1">Belongs to the isocitrate and isopropylmalate dehydrogenases family. LeuB type 1 subfamily.</text>
</comment>
<gene>
    <name evidence="1" type="primary">leuB</name>
    <name type="ordered locus">Synpcc7942_1505</name>
</gene>
<protein>
    <recommendedName>
        <fullName evidence="1">3-isopropylmalate dehydrogenase</fullName>
        <ecNumber evidence="1">1.1.1.85</ecNumber>
    </recommendedName>
    <alternativeName>
        <fullName evidence="1">3-IPM-DH</fullName>
    </alternativeName>
    <alternativeName>
        <fullName evidence="1">Beta-IPM dehydrogenase</fullName>
        <shortName evidence="1">IMDH</shortName>
    </alternativeName>
</protein>
<keyword id="KW-0028">Amino-acid biosynthesis</keyword>
<keyword id="KW-0100">Branched-chain amino acid biosynthesis</keyword>
<keyword id="KW-0963">Cytoplasm</keyword>
<keyword id="KW-0432">Leucine biosynthesis</keyword>
<keyword id="KW-0460">Magnesium</keyword>
<keyword id="KW-0464">Manganese</keyword>
<keyword id="KW-0479">Metal-binding</keyword>
<keyword id="KW-0520">NAD</keyword>
<keyword id="KW-0560">Oxidoreductase</keyword>
<keyword id="KW-1185">Reference proteome</keyword>
<accession>Q31N34</accession>